<sequence length="208" mass="22692">MIVLALDVYEGERAIKIAKSVKDYISMIKVNWPLILGSGVDIIRRLKEETGVEIIADLKLADIPNTNRLIARKVFGAGADYVIVHTFVGRDSVMAVKELGEIIMVVEMSHPGALEFINPLTDRFIEVANEIEPFGVIAPGTRPERIGYIRDRLKEGIKILAPGIGAQGGKAKDAVKAGADYIIVGRAIYNAPNPREAAKAIYDEIRGV</sequence>
<name>PYRF_PYRHO</name>
<accession>O58462</accession>
<feature type="chain" id="PRO_0000134616" description="Orotidine 5'-phosphate decarboxylase">
    <location>
        <begin position="1"/>
        <end position="208"/>
    </location>
</feature>
<feature type="active site" description="Proton donor">
    <location>
        <position position="59"/>
    </location>
</feature>
<feature type="binding site">
    <location>
        <position position="7"/>
    </location>
    <ligand>
        <name>substrate</name>
    </ligand>
</feature>
<feature type="binding site">
    <location>
        <position position="29"/>
    </location>
    <ligand>
        <name>substrate</name>
    </ligand>
</feature>
<feature type="binding site">
    <location>
        <begin position="57"/>
        <end position="66"/>
    </location>
    <ligand>
        <name>substrate</name>
    </ligand>
</feature>
<feature type="binding site">
    <location>
        <position position="109"/>
    </location>
    <ligand>
        <name>substrate</name>
    </ligand>
</feature>
<feature type="binding site">
    <location>
        <begin position="162"/>
        <end position="172"/>
    </location>
    <ligand>
        <name>substrate</name>
    </ligand>
</feature>
<feature type="binding site">
    <location>
        <position position="185"/>
    </location>
    <ligand>
        <name>substrate</name>
    </ligand>
</feature>
<feature type="binding site">
    <location>
        <position position="186"/>
    </location>
    <ligand>
        <name>substrate</name>
    </ligand>
</feature>
<feature type="strand" evidence="5">
    <location>
        <begin position="2"/>
        <end position="5"/>
    </location>
</feature>
<feature type="helix" evidence="5">
    <location>
        <begin position="11"/>
        <end position="21"/>
    </location>
</feature>
<feature type="helix" evidence="5">
    <location>
        <begin position="22"/>
        <end position="24"/>
    </location>
</feature>
<feature type="strand" evidence="5">
    <location>
        <begin position="26"/>
        <end position="31"/>
    </location>
</feature>
<feature type="helix" evidence="5">
    <location>
        <begin position="32"/>
        <end position="38"/>
    </location>
</feature>
<feature type="helix" evidence="5">
    <location>
        <begin position="42"/>
        <end position="50"/>
    </location>
</feature>
<feature type="strand" evidence="5">
    <location>
        <begin position="53"/>
        <end position="60"/>
    </location>
</feature>
<feature type="helix" evidence="5">
    <location>
        <begin position="64"/>
        <end position="76"/>
    </location>
</feature>
<feature type="strand" evidence="5">
    <location>
        <begin position="80"/>
        <end position="86"/>
    </location>
</feature>
<feature type="helix" evidence="5">
    <location>
        <begin position="90"/>
        <end position="97"/>
    </location>
</feature>
<feature type="strand" evidence="5">
    <location>
        <begin position="100"/>
        <end position="105"/>
    </location>
</feature>
<feature type="helix" evidence="5">
    <location>
        <begin position="111"/>
        <end position="114"/>
    </location>
</feature>
<feature type="turn" evidence="5">
    <location>
        <begin position="115"/>
        <end position="117"/>
    </location>
</feature>
<feature type="helix" evidence="5">
    <location>
        <begin position="118"/>
        <end position="120"/>
    </location>
</feature>
<feature type="helix" evidence="5">
    <location>
        <begin position="121"/>
        <end position="131"/>
    </location>
</feature>
<feature type="strand" evidence="5">
    <location>
        <begin position="134"/>
        <end position="137"/>
    </location>
</feature>
<feature type="helix" evidence="5">
    <location>
        <begin position="144"/>
        <end position="152"/>
    </location>
</feature>
<feature type="strand" evidence="5">
    <location>
        <begin position="158"/>
        <end position="161"/>
    </location>
</feature>
<feature type="strand" evidence="4">
    <location>
        <begin position="166"/>
        <end position="169"/>
    </location>
</feature>
<feature type="helix" evidence="5">
    <location>
        <begin position="170"/>
        <end position="177"/>
    </location>
</feature>
<feature type="strand" evidence="5">
    <location>
        <begin position="180"/>
        <end position="184"/>
    </location>
</feature>
<feature type="helix" evidence="5">
    <location>
        <begin position="186"/>
        <end position="189"/>
    </location>
</feature>
<feature type="strand" evidence="5">
    <location>
        <begin position="191"/>
        <end position="193"/>
    </location>
</feature>
<feature type="helix" evidence="5">
    <location>
        <begin position="194"/>
        <end position="205"/>
    </location>
</feature>
<reference key="1">
    <citation type="journal article" date="1998" name="DNA Res.">
        <title>Complete sequence and gene organization of the genome of a hyper-thermophilic archaebacterium, Pyrococcus horikoshii OT3.</title>
        <authorList>
            <person name="Kawarabayasi Y."/>
            <person name="Sawada M."/>
            <person name="Horikawa H."/>
            <person name="Haikawa Y."/>
            <person name="Hino Y."/>
            <person name="Yamamoto S."/>
            <person name="Sekine M."/>
            <person name="Baba S."/>
            <person name="Kosugi H."/>
            <person name="Hosoyama A."/>
            <person name="Nagai Y."/>
            <person name="Sakai M."/>
            <person name="Ogura K."/>
            <person name="Otsuka R."/>
            <person name="Nakazawa H."/>
            <person name="Takamiya M."/>
            <person name="Ohfuku Y."/>
            <person name="Funahashi T."/>
            <person name="Tanaka T."/>
            <person name="Kudoh Y."/>
            <person name="Yamazaki J."/>
            <person name="Kushida N."/>
            <person name="Oguchi A."/>
            <person name="Aoki K."/>
            <person name="Yoshizawa T."/>
            <person name="Nakamura Y."/>
            <person name="Robb F.T."/>
            <person name="Horikoshi K."/>
            <person name="Masuchi Y."/>
            <person name="Shizuya H."/>
            <person name="Kikuchi H."/>
        </authorList>
    </citation>
    <scope>NUCLEOTIDE SEQUENCE [LARGE SCALE GENOMIC DNA]</scope>
    <source>
        <strain>ATCC 700860 / DSM 12428 / JCM 9974 / NBRC 100139 / OT-3</strain>
    </source>
</reference>
<reference key="2">
    <citation type="submission" date="2006-01" db="PDB data bank">
        <title>Crystal structure of orotidine 5'-phosphate decarboxylase from Pyrococcus horikoshii OT3.</title>
        <authorList>
            <consortium name="RIKEN structural genomics initiative (RSGI)"/>
        </authorList>
    </citation>
    <scope>X-RAY CRYSTALLOGRAPHY (1.6 ANGSTROMS) OF NATIVE PROTEIN AND COMPLEXES WITH UMP AND XMP</scope>
    <scope>SUBUNIT</scope>
    <source>
        <strain>ATCC 700860 / DSM 12428 / JCM 9974 / NBRC 100139 / OT-3</strain>
    </source>
</reference>
<protein>
    <recommendedName>
        <fullName>Orotidine 5'-phosphate decarboxylase</fullName>
        <ecNumber>4.1.1.23</ecNumber>
    </recommendedName>
    <alternativeName>
        <fullName>OMP decarboxylase</fullName>
        <shortName>OMPDCase</shortName>
        <shortName>OMPdecase</shortName>
    </alternativeName>
</protein>
<gene>
    <name type="primary">pyrF</name>
    <name type="ordered locus">PH0731</name>
</gene>
<keyword id="KW-0002">3D-structure</keyword>
<keyword id="KW-0210">Decarboxylase</keyword>
<keyword id="KW-0456">Lyase</keyword>
<keyword id="KW-0665">Pyrimidine biosynthesis</keyword>
<dbReference type="EC" id="4.1.1.23"/>
<dbReference type="EMBL" id="BA000001">
    <property type="protein sequence ID" value="BAA29822.1"/>
    <property type="status" value="ALT_INIT"/>
    <property type="molecule type" value="Genomic_DNA"/>
</dbReference>
<dbReference type="PIR" id="D71120">
    <property type="entry name" value="D71120"/>
</dbReference>
<dbReference type="RefSeq" id="WP_048053207.1">
    <property type="nucleotide sequence ID" value="NC_000961.1"/>
</dbReference>
<dbReference type="PDB" id="2CZ5">
    <property type="method" value="X-ray"/>
    <property type="resolution" value="1.85 A"/>
    <property type="chains" value="A/B=1-208"/>
</dbReference>
<dbReference type="PDB" id="2CZD">
    <property type="method" value="X-ray"/>
    <property type="resolution" value="1.60 A"/>
    <property type="chains" value="A/B=1-208"/>
</dbReference>
<dbReference type="PDB" id="2CZE">
    <property type="method" value="X-ray"/>
    <property type="resolution" value="1.85 A"/>
    <property type="chains" value="A/B=1-208"/>
</dbReference>
<dbReference type="PDB" id="2CZF">
    <property type="method" value="X-ray"/>
    <property type="resolution" value="1.85 A"/>
    <property type="chains" value="A/B=1-208"/>
</dbReference>
<dbReference type="PDBsum" id="2CZ5"/>
<dbReference type="PDBsum" id="2CZD"/>
<dbReference type="PDBsum" id="2CZE"/>
<dbReference type="PDBsum" id="2CZF"/>
<dbReference type="SMR" id="O58462"/>
<dbReference type="STRING" id="70601.gene:9377678"/>
<dbReference type="EnsemblBacteria" id="BAA29822">
    <property type="protein sequence ID" value="BAA29822"/>
    <property type="gene ID" value="BAA29822"/>
</dbReference>
<dbReference type="GeneID" id="1443064"/>
<dbReference type="KEGG" id="pho:PH0731"/>
<dbReference type="eggNOG" id="arCOG00081">
    <property type="taxonomic scope" value="Archaea"/>
</dbReference>
<dbReference type="OrthoDB" id="94124at2157"/>
<dbReference type="UniPathway" id="UPA00070">
    <property type="reaction ID" value="UER00120"/>
</dbReference>
<dbReference type="EvolutionaryTrace" id="O58462"/>
<dbReference type="Proteomes" id="UP000000752">
    <property type="component" value="Chromosome"/>
</dbReference>
<dbReference type="GO" id="GO:0005829">
    <property type="term" value="C:cytosol"/>
    <property type="evidence" value="ECO:0007669"/>
    <property type="project" value="TreeGrafter"/>
</dbReference>
<dbReference type="GO" id="GO:0004590">
    <property type="term" value="F:orotidine-5'-phosphate decarboxylase activity"/>
    <property type="evidence" value="ECO:0007669"/>
    <property type="project" value="UniProtKB-UniRule"/>
</dbReference>
<dbReference type="GO" id="GO:0006207">
    <property type="term" value="P:'de novo' pyrimidine nucleobase biosynthetic process"/>
    <property type="evidence" value="ECO:0007669"/>
    <property type="project" value="InterPro"/>
</dbReference>
<dbReference type="GO" id="GO:0044205">
    <property type="term" value="P:'de novo' UMP biosynthetic process"/>
    <property type="evidence" value="ECO:0007669"/>
    <property type="project" value="UniProtKB-UniRule"/>
</dbReference>
<dbReference type="CDD" id="cd04725">
    <property type="entry name" value="OMP_decarboxylase_like"/>
    <property type="match status" value="1"/>
</dbReference>
<dbReference type="Gene3D" id="3.20.20.70">
    <property type="entry name" value="Aldolase class I"/>
    <property type="match status" value="1"/>
</dbReference>
<dbReference type="HAMAP" id="MF_01200_A">
    <property type="entry name" value="OMPdecase_type1_A"/>
    <property type="match status" value="1"/>
</dbReference>
<dbReference type="InterPro" id="IPR013785">
    <property type="entry name" value="Aldolase_TIM"/>
</dbReference>
<dbReference type="InterPro" id="IPR014732">
    <property type="entry name" value="OMPdecase"/>
</dbReference>
<dbReference type="InterPro" id="IPR047595">
    <property type="entry name" value="OMPdecase_arc"/>
</dbReference>
<dbReference type="InterPro" id="IPR018089">
    <property type="entry name" value="OMPdecase_AS"/>
</dbReference>
<dbReference type="InterPro" id="IPR001754">
    <property type="entry name" value="OMPdeCOase_dom"/>
</dbReference>
<dbReference type="InterPro" id="IPR011060">
    <property type="entry name" value="RibuloseP-bd_barrel"/>
</dbReference>
<dbReference type="NCBIfam" id="NF010386">
    <property type="entry name" value="PRK13813.1"/>
    <property type="match status" value="1"/>
</dbReference>
<dbReference type="NCBIfam" id="TIGR01740">
    <property type="entry name" value="pyrF"/>
    <property type="match status" value="1"/>
</dbReference>
<dbReference type="PANTHER" id="PTHR32119">
    <property type="entry name" value="OROTIDINE 5'-PHOSPHATE DECARBOXYLASE"/>
    <property type="match status" value="1"/>
</dbReference>
<dbReference type="PANTHER" id="PTHR32119:SF2">
    <property type="entry name" value="OROTIDINE 5'-PHOSPHATE DECARBOXYLASE"/>
    <property type="match status" value="1"/>
</dbReference>
<dbReference type="Pfam" id="PF00215">
    <property type="entry name" value="OMPdecase"/>
    <property type="match status" value="1"/>
</dbReference>
<dbReference type="SMART" id="SM00934">
    <property type="entry name" value="OMPdecase"/>
    <property type="match status" value="1"/>
</dbReference>
<dbReference type="SUPFAM" id="SSF51366">
    <property type="entry name" value="Ribulose-phoshate binding barrel"/>
    <property type="match status" value="1"/>
</dbReference>
<dbReference type="PROSITE" id="PS00156">
    <property type="entry name" value="OMPDECASE"/>
    <property type="match status" value="1"/>
</dbReference>
<comment type="function">
    <text evidence="1">Catalyzes the decarboxylation of orotidine 5'-monophosphate (OMP) to uridine 5'-monophosphate (UMP).</text>
</comment>
<comment type="catalytic activity">
    <reaction>
        <text>orotidine 5'-phosphate + H(+) = UMP + CO2</text>
        <dbReference type="Rhea" id="RHEA:11596"/>
        <dbReference type="ChEBI" id="CHEBI:15378"/>
        <dbReference type="ChEBI" id="CHEBI:16526"/>
        <dbReference type="ChEBI" id="CHEBI:57538"/>
        <dbReference type="ChEBI" id="CHEBI:57865"/>
        <dbReference type="EC" id="4.1.1.23"/>
    </reaction>
</comment>
<comment type="pathway">
    <text>Pyrimidine metabolism; UMP biosynthesis via de novo pathway; UMP from orotate: step 2/2.</text>
</comment>
<comment type="subunit">
    <text evidence="2">Homodimer.</text>
</comment>
<comment type="similarity">
    <text evidence="3">Belongs to the OMP decarboxylase family. Type 1 subfamily.</text>
</comment>
<comment type="sequence caution" evidence="3">
    <conflict type="erroneous initiation">
        <sequence resource="EMBL-CDS" id="BAA29822"/>
    </conflict>
</comment>
<organism>
    <name type="scientific">Pyrococcus horikoshii (strain ATCC 700860 / DSM 12428 / JCM 9974 / NBRC 100139 / OT-3)</name>
    <dbReference type="NCBI Taxonomy" id="70601"/>
    <lineage>
        <taxon>Archaea</taxon>
        <taxon>Methanobacteriati</taxon>
        <taxon>Methanobacteriota</taxon>
        <taxon>Thermococci</taxon>
        <taxon>Thermococcales</taxon>
        <taxon>Thermococcaceae</taxon>
        <taxon>Pyrococcus</taxon>
    </lineage>
</organism>
<evidence type="ECO:0000250" key="1"/>
<evidence type="ECO:0000269" key="2">
    <source ref="2"/>
</evidence>
<evidence type="ECO:0000305" key="3"/>
<evidence type="ECO:0007829" key="4">
    <source>
        <dbReference type="PDB" id="2CZ5"/>
    </source>
</evidence>
<evidence type="ECO:0007829" key="5">
    <source>
        <dbReference type="PDB" id="2CZD"/>
    </source>
</evidence>
<proteinExistence type="evidence at protein level"/>